<name>PG001_VACCL</name>
<organismHost>
    <name type="scientific">Homo sapiens</name>
    <name type="common">Human</name>
    <dbReference type="NCBI Taxonomy" id="9606"/>
</organismHost>
<proteinExistence type="evidence at protein level"/>
<evidence type="ECO:0000250" key="1">
    <source>
        <dbReference type="UniProtKB" id="Q805H7"/>
    </source>
</evidence>
<evidence type="ECO:0000255" key="2"/>
<evidence type="ECO:0000256" key="3">
    <source>
        <dbReference type="SAM" id="MobiDB-lite"/>
    </source>
</evidence>
<evidence type="ECO:0000269" key="4">
    <source>
    </source>
</evidence>
<evidence type="ECO:0000305" key="5"/>
<accession>P19063</accession>
<reference key="1">
    <citation type="journal article" date="1990" name="J. Gen. Virol.">
        <title>DNA sequence of the gene encoding a major secreted protein of vaccinia virus, strain Lister.</title>
        <authorList>
            <person name="Patel A.H."/>
            <person name="Gaffney D.F."/>
            <person name="Subak-Sharpe J.H."/>
            <person name="Stow N.D."/>
        </authorList>
    </citation>
    <scope>NUCLEOTIDE SEQUENCE [GENOMIC DNA]</scope>
</reference>
<reference key="2">
    <citation type="journal article" date="1998" name="J. Immunol.">
        <title>Blockade of chemokine activity by a soluble chemokine binding protein from vaccinia virus.</title>
        <authorList>
            <person name="Alcami A."/>
            <person name="Symons J.A."/>
            <person name="Collins P.D."/>
            <person name="Williams T.J."/>
            <person name="Smith G.L."/>
        </authorList>
    </citation>
    <scope>CHARACTERIZATION</scope>
    <scope>FUNCTION</scope>
    <scope>CHEMOKINE-BINDING</scope>
</reference>
<feature type="signal peptide" evidence="2">
    <location>
        <begin position="1"/>
        <end position="17"/>
    </location>
</feature>
<feature type="chain" id="PRO_0000040612" description="Chemokine-binding protein">
    <location>
        <begin position="18"/>
        <end position="258"/>
    </location>
</feature>
<feature type="region of interest" description="Disordered" evidence="3">
    <location>
        <begin position="65"/>
        <end position="93"/>
    </location>
</feature>
<feature type="compositionally biased region" description="Acidic residues" evidence="3">
    <location>
        <begin position="68"/>
        <end position="91"/>
    </location>
</feature>
<organism>
    <name type="scientific">Vaccinia virus (strain Lister)</name>
    <name type="common">VACV</name>
    <dbReference type="NCBI Taxonomy" id="10252"/>
    <lineage>
        <taxon>Viruses</taxon>
        <taxon>Varidnaviria</taxon>
        <taxon>Bamfordvirae</taxon>
        <taxon>Nucleocytoviricota</taxon>
        <taxon>Pokkesviricetes</taxon>
        <taxon>Chitovirales</taxon>
        <taxon>Poxviridae</taxon>
        <taxon>Chordopoxvirinae</taxon>
        <taxon>Orthopoxvirus</taxon>
        <taxon>Vaccinia virus</taxon>
    </lineage>
</organism>
<sequence>MKQYIVLACMCLAAAAMPASLQQSSSSSSSCTEEENKHHMGIDVIIKVTKQDQTPTNDKICQSVTEITESESDPDPEVESEDDSTSVEDVDPPTTYYSIIGGGLRMNFGFTKCPQIKSISESADGNTVNARLSSVSPGQGKDSPAITREEALAMIKDCEVSIDIRCSEEEKDSDIKTHPVLGSNISHKKVSYEDIIGSTIVDTKCVKNLEFSVRIGDMCKESSELEVKDGFKYVDGSASEGATDDTSLIDSTKLKACV</sequence>
<keyword id="KW-0244">Early protein</keyword>
<keyword id="KW-0945">Host-virus interaction</keyword>
<keyword id="KW-1086">Inhibition of host chemokines by virus</keyword>
<keyword id="KW-0964">Secreted</keyword>
<keyword id="KW-0732">Signal</keyword>
<keyword id="KW-0899">Viral immunoevasion</keyword>
<gene>
    <name type="primary">OPG001</name>
    <name type="synonym">B29R</name>
    <name type="synonym">C23L</name>
</gene>
<comment type="function">
    <text evidence="4">Inhibits host immune defense by binding to host chemokines. Binds host CC chemokines (beta chemokines) such as RANTES with high affinity, but not CXC or C chemokines (alpha and gamma chemokines).</text>
</comment>
<comment type="subunit">
    <text>Binds to host CC chemokines, such as RANTES/CCL5, MIP-1alpha/CCL3, MCP-1/CCL2 and eotaxin.</text>
</comment>
<comment type="subcellular location">
    <subcellularLocation>
        <location>Secreted</location>
    </subcellularLocation>
</comment>
<comment type="induction">
    <text evidence="1">Expressed in the early phase of the viral replicative cycle.</text>
</comment>
<comment type="similarity">
    <text evidence="5">Belongs to the orthopoxvirus OPG001 family.</text>
</comment>
<protein>
    <recommendedName>
        <fullName>Chemokine-binding protein</fullName>
        <shortName>vCKBP</shortName>
    </recommendedName>
    <alternativeName>
        <fullName>35 kDa protein</fullName>
    </alternativeName>
</protein>
<dbReference type="EMBL" id="D00612">
    <property type="protein sequence ID" value="BAA00487.1"/>
    <property type="molecule type" value="Genomic_DNA"/>
</dbReference>
<dbReference type="PIR" id="A36640">
    <property type="entry name" value="WMVZ35"/>
</dbReference>
<dbReference type="BMRB" id="P19063"/>
<dbReference type="SMR" id="P19063"/>
<dbReference type="GO" id="GO:0005576">
    <property type="term" value="C:extracellular region"/>
    <property type="evidence" value="ECO:0007669"/>
    <property type="project" value="UniProtKB-SubCell"/>
</dbReference>
<dbReference type="Gene3D" id="2.60.240.10">
    <property type="entry name" value="Major secreted virus protein"/>
    <property type="match status" value="1"/>
</dbReference>
<dbReference type="InterPro" id="IPR009173">
    <property type="entry name" value="Chemkine-bd_vir"/>
</dbReference>
<dbReference type="InterPro" id="IPR003184">
    <property type="entry name" value="Orthopox_35kDa"/>
</dbReference>
<dbReference type="InterPro" id="IPR036540">
    <property type="entry name" value="Pox_vCCI-like_sf"/>
</dbReference>
<dbReference type="Pfam" id="PF02250">
    <property type="entry name" value="Orthopox_35kD"/>
    <property type="match status" value="1"/>
</dbReference>
<dbReference type="PIRSF" id="PIRSF003696">
    <property type="entry name" value="VAC_C23L"/>
    <property type="match status" value="1"/>
</dbReference>
<dbReference type="SUPFAM" id="SSF49889">
    <property type="entry name" value="Soluble secreted chemokine inhibitor, VCCI"/>
    <property type="match status" value="1"/>
</dbReference>